<keyword id="KW-1185">Reference proteome</keyword>
<keyword id="KW-0687">Ribonucleoprotein</keyword>
<keyword id="KW-0689">Ribosomal protein</keyword>
<dbReference type="EMBL" id="BX248356">
    <property type="protein sequence ID" value="CAE49369.1"/>
    <property type="molecule type" value="Genomic_DNA"/>
</dbReference>
<dbReference type="RefSeq" id="WP_003850746.1">
    <property type="nucleotide sequence ID" value="NC_002935.2"/>
</dbReference>
<dbReference type="SMR" id="Q6NIC5"/>
<dbReference type="STRING" id="257309.DIP0852"/>
<dbReference type="KEGG" id="cdi:DIP0852"/>
<dbReference type="HOGENOM" id="CLU_114306_2_1_11"/>
<dbReference type="Proteomes" id="UP000002198">
    <property type="component" value="Chromosome"/>
</dbReference>
<dbReference type="GO" id="GO:1990904">
    <property type="term" value="C:ribonucleoprotein complex"/>
    <property type="evidence" value="ECO:0007669"/>
    <property type="project" value="UniProtKB-KW"/>
</dbReference>
<dbReference type="GO" id="GO:0005840">
    <property type="term" value="C:ribosome"/>
    <property type="evidence" value="ECO:0007669"/>
    <property type="project" value="UniProtKB-KW"/>
</dbReference>
<dbReference type="GO" id="GO:0003735">
    <property type="term" value="F:structural constituent of ribosome"/>
    <property type="evidence" value="ECO:0007669"/>
    <property type="project" value="InterPro"/>
</dbReference>
<dbReference type="GO" id="GO:0006412">
    <property type="term" value="P:translation"/>
    <property type="evidence" value="ECO:0007669"/>
    <property type="project" value="UniProtKB-UniRule"/>
</dbReference>
<dbReference type="Gene3D" id="4.10.830.30">
    <property type="entry name" value="Ribosomal protein L31"/>
    <property type="match status" value="1"/>
</dbReference>
<dbReference type="HAMAP" id="MF_00502">
    <property type="entry name" value="Ribosomal_bL31_2"/>
    <property type="match status" value="1"/>
</dbReference>
<dbReference type="InterPro" id="IPR034704">
    <property type="entry name" value="Ribosomal_bL28/bL31-like_sf"/>
</dbReference>
<dbReference type="InterPro" id="IPR002150">
    <property type="entry name" value="Ribosomal_bL31"/>
</dbReference>
<dbReference type="InterPro" id="IPR027493">
    <property type="entry name" value="Ribosomal_bL31_B"/>
</dbReference>
<dbReference type="InterPro" id="IPR042105">
    <property type="entry name" value="Ribosomal_bL31_sf"/>
</dbReference>
<dbReference type="NCBIfam" id="TIGR00105">
    <property type="entry name" value="L31"/>
    <property type="match status" value="1"/>
</dbReference>
<dbReference type="NCBIfam" id="NF001809">
    <property type="entry name" value="PRK00528.1"/>
    <property type="match status" value="1"/>
</dbReference>
<dbReference type="NCBIfam" id="NF002462">
    <property type="entry name" value="PRK01678.1"/>
    <property type="match status" value="1"/>
</dbReference>
<dbReference type="PANTHER" id="PTHR33280">
    <property type="entry name" value="50S RIBOSOMAL PROTEIN L31, CHLOROPLASTIC"/>
    <property type="match status" value="1"/>
</dbReference>
<dbReference type="PANTHER" id="PTHR33280:SF1">
    <property type="entry name" value="LARGE RIBOSOMAL SUBUNIT PROTEIN BL31C"/>
    <property type="match status" value="1"/>
</dbReference>
<dbReference type="Pfam" id="PF01197">
    <property type="entry name" value="Ribosomal_L31"/>
    <property type="match status" value="1"/>
</dbReference>
<dbReference type="PRINTS" id="PR01249">
    <property type="entry name" value="RIBOSOMALL31"/>
</dbReference>
<dbReference type="SUPFAM" id="SSF143800">
    <property type="entry name" value="L28p-like"/>
    <property type="match status" value="1"/>
</dbReference>
<dbReference type="PROSITE" id="PS01143">
    <property type="entry name" value="RIBOSOMAL_L31"/>
    <property type="match status" value="1"/>
</dbReference>
<name>RL31B_CORDI</name>
<proteinExistence type="inferred from homology"/>
<feature type="chain" id="PRO_0000173219" description="Large ribosomal subunit protein bL31B">
    <location>
        <begin position="1"/>
        <end position="88"/>
    </location>
</feature>
<organism>
    <name type="scientific">Corynebacterium diphtheriae (strain ATCC 700971 / NCTC 13129 / Biotype gravis)</name>
    <dbReference type="NCBI Taxonomy" id="257309"/>
    <lineage>
        <taxon>Bacteria</taxon>
        <taxon>Bacillati</taxon>
        <taxon>Actinomycetota</taxon>
        <taxon>Actinomycetes</taxon>
        <taxon>Mycobacteriales</taxon>
        <taxon>Corynebacteriaceae</taxon>
        <taxon>Corynebacterium</taxon>
    </lineage>
</organism>
<comment type="subunit">
    <text evidence="1">Part of the 50S ribosomal subunit.</text>
</comment>
<comment type="similarity">
    <text evidence="1">Belongs to the bacterial ribosomal protein bL31 family. Type B subfamily.</text>
</comment>
<accession>Q6NIC5</accession>
<sequence>MKKDIHPDYHPVVFQDAGTGHQFLTKSTATSDRTVAWEDGNEYPLIVVDVTSESHPFWTGAQRVMDTAGRVEKFNQRYGALARRKKNK</sequence>
<evidence type="ECO:0000255" key="1">
    <source>
        <dbReference type="HAMAP-Rule" id="MF_00502"/>
    </source>
</evidence>
<evidence type="ECO:0000305" key="2"/>
<protein>
    <recommendedName>
        <fullName evidence="1">Large ribosomal subunit protein bL31B</fullName>
    </recommendedName>
    <alternativeName>
        <fullName evidence="2">50S ribosomal protein L31 type B</fullName>
    </alternativeName>
</protein>
<reference key="1">
    <citation type="journal article" date="2003" name="Nucleic Acids Res.">
        <title>The complete genome sequence and analysis of Corynebacterium diphtheriae NCTC13129.</title>
        <authorList>
            <person name="Cerdeno-Tarraga A.-M."/>
            <person name="Efstratiou A."/>
            <person name="Dover L.G."/>
            <person name="Holden M.T.G."/>
            <person name="Pallen M.J."/>
            <person name="Bentley S.D."/>
            <person name="Besra G.S."/>
            <person name="Churcher C.M."/>
            <person name="James K.D."/>
            <person name="De Zoysa A."/>
            <person name="Chillingworth T."/>
            <person name="Cronin A."/>
            <person name="Dowd L."/>
            <person name="Feltwell T."/>
            <person name="Hamlin N."/>
            <person name="Holroyd S."/>
            <person name="Jagels K."/>
            <person name="Moule S."/>
            <person name="Quail M.A."/>
            <person name="Rabbinowitsch E."/>
            <person name="Rutherford K.M."/>
            <person name="Thomson N.R."/>
            <person name="Unwin L."/>
            <person name="Whitehead S."/>
            <person name="Barrell B.G."/>
            <person name="Parkhill J."/>
        </authorList>
    </citation>
    <scope>NUCLEOTIDE SEQUENCE [LARGE SCALE GENOMIC DNA]</scope>
    <source>
        <strain>ATCC 700971 / NCTC 13129 / Biotype gravis</strain>
    </source>
</reference>
<gene>
    <name evidence="1" type="primary">rpmE2</name>
    <name type="synonym">rpmE</name>
    <name type="ordered locus">DIP0852</name>
</gene>